<name>RS19_RHIJ3</name>
<feature type="chain" id="PRO_0000265411" description="Small ribosomal subunit protein uS19">
    <location>
        <begin position="1"/>
        <end position="92"/>
    </location>
</feature>
<keyword id="KW-0687">Ribonucleoprotein</keyword>
<keyword id="KW-0689">Ribosomal protein</keyword>
<keyword id="KW-0694">RNA-binding</keyword>
<keyword id="KW-0699">rRNA-binding</keyword>
<evidence type="ECO:0000255" key="1">
    <source>
        <dbReference type="HAMAP-Rule" id="MF_00531"/>
    </source>
</evidence>
<evidence type="ECO:0000305" key="2"/>
<reference key="1">
    <citation type="journal article" date="2006" name="Genome Biol.">
        <title>The genome of Rhizobium leguminosarum has recognizable core and accessory components.</title>
        <authorList>
            <person name="Young J.P.W."/>
            <person name="Crossman L.C."/>
            <person name="Johnston A.W.B."/>
            <person name="Thomson N.R."/>
            <person name="Ghazoui Z.F."/>
            <person name="Hull K.H."/>
            <person name="Wexler M."/>
            <person name="Curson A.R.J."/>
            <person name="Todd J.D."/>
            <person name="Poole P.S."/>
            <person name="Mauchline T.H."/>
            <person name="East A.K."/>
            <person name="Quail M.A."/>
            <person name="Churcher C."/>
            <person name="Arrowsmith C."/>
            <person name="Cherevach I."/>
            <person name="Chillingworth T."/>
            <person name="Clarke K."/>
            <person name="Cronin A."/>
            <person name="Davis P."/>
            <person name="Fraser A."/>
            <person name="Hance Z."/>
            <person name="Hauser H."/>
            <person name="Jagels K."/>
            <person name="Moule S."/>
            <person name="Mungall K."/>
            <person name="Norbertczak H."/>
            <person name="Rabbinowitsch E."/>
            <person name="Sanders M."/>
            <person name="Simmonds M."/>
            <person name="Whitehead S."/>
            <person name="Parkhill J."/>
        </authorList>
    </citation>
    <scope>NUCLEOTIDE SEQUENCE [LARGE SCALE GENOMIC DNA]</scope>
    <source>
        <strain>DSM 114642 / LMG 32736 / 3841</strain>
    </source>
</reference>
<gene>
    <name evidence="1" type="primary">rpsS</name>
    <name type="ordered locus">RL1778</name>
</gene>
<proteinExistence type="inferred from homology"/>
<organism>
    <name type="scientific">Rhizobium johnstonii (strain DSM 114642 / LMG 32736 / 3841)</name>
    <name type="common">Rhizobium leguminosarum bv. viciae</name>
    <dbReference type="NCBI Taxonomy" id="216596"/>
    <lineage>
        <taxon>Bacteria</taxon>
        <taxon>Pseudomonadati</taxon>
        <taxon>Pseudomonadota</taxon>
        <taxon>Alphaproteobacteria</taxon>
        <taxon>Hyphomicrobiales</taxon>
        <taxon>Rhizobiaceae</taxon>
        <taxon>Rhizobium/Agrobacterium group</taxon>
        <taxon>Rhizobium</taxon>
        <taxon>Rhizobium johnstonii</taxon>
    </lineage>
</organism>
<dbReference type="EMBL" id="AM236080">
    <property type="protein sequence ID" value="CAK07273.1"/>
    <property type="molecule type" value="Genomic_DNA"/>
</dbReference>
<dbReference type="RefSeq" id="WP_003547552.1">
    <property type="nucleotide sequence ID" value="NC_008380.1"/>
</dbReference>
<dbReference type="SMR" id="Q1MID7"/>
<dbReference type="EnsemblBacteria" id="CAK07273">
    <property type="protein sequence ID" value="CAK07273"/>
    <property type="gene ID" value="RL1778"/>
</dbReference>
<dbReference type="GeneID" id="84669491"/>
<dbReference type="KEGG" id="rle:RL1778"/>
<dbReference type="eggNOG" id="COG0185">
    <property type="taxonomic scope" value="Bacteria"/>
</dbReference>
<dbReference type="HOGENOM" id="CLU_144911_0_1_5"/>
<dbReference type="Proteomes" id="UP000006575">
    <property type="component" value="Chromosome"/>
</dbReference>
<dbReference type="GO" id="GO:0005737">
    <property type="term" value="C:cytoplasm"/>
    <property type="evidence" value="ECO:0007669"/>
    <property type="project" value="UniProtKB-ARBA"/>
</dbReference>
<dbReference type="GO" id="GO:0015935">
    <property type="term" value="C:small ribosomal subunit"/>
    <property type="evidence" value="ECO:0007669"/>
    <property type="project" value="InterPro"/>
</dbReference>
<dbReference type="GO" id="GO:0019843">
    <property type="term" value="F:rRNA binding"/>
    <property type="evidence" value="ECO:0007669"/>
    <property type="project" value="UniProtKB-UniRule"/>
</dbReference>
<dbReference type="GO" id="GO:0003735">
    <property type="term" value="F:structural constituent of ribosome"/>
    <property type="evidence" value="ECO:0007669"/>
    <property type="project" value="InterPro"/>
</dbReference>
<dbReference type="GO" id="GO:0000028">
    <property type="term" value="P:ribosomal small subunit assembly"/>
    <property type="evidence" value="ECO:0007669"/>
    <property type="project" value="TreeGrafter"/>
</dbReference>
<dbReference type="GO" id="GO:0006412">
    <property type="term" value="P:translation"/>
    <property type="evidence" value="ECO:0007669"/>
    <property type="project" value="UniProtKB-UniRule"/>
</dbReference>
<dbReference type="FunFam" id="3.30.860.10:FF:000001">
    <property type="entry name" value="30S ribosomal protein S19"/>
    <property type="match status" value="1"/>
</dbReference>
<dbReference type="Gene3D" id="3.30.860.10">
    <property type="entry name" value="30s Ribosomal Protein S19, Chain A"/>
    <property type="match status" value="1"/>
</dbReference>
<dbReference type="HAMAP" id="MF_00531">
    <property type="entry name" value="Ribosomal_uS19"/>
    <property type="match status" value="1"/>
</dbReference>
<dbReference type="InterPro" id="IPR002222">
    <property type="entry name" value="Ribosomal_uS19"/>
</dbReference>
<dbReference type="InterPro" id="IPR005732">
    <property type="entry name" value="Ribosomal_uS19_bac-type"/>
</dbReference>
<dbReference type="InterPro" id="IPR020934">
    <property type="entry name" value="Ribosomal_uS19_CS"/>
</dbReference>
<dbReference type="InterPro" id="IPR023575">
    <property type="entry name" value="Ribosomal_uS19_SF"/>
</dbReference>
<dbReference type="NCBIfam" id="TIGR01050">
    <property type="entry name" value="rpsS_bact"/>
    <property type="match status" value="1"/>
</dbReference>
<dbReference type="PANTHER" id="PTHR11880">
    <property type="entry name" value="RIBOSOMAL PROTEIN S19P FAMILY MEMBER"/>
    <property type="match status" value="1"/>
</dbReference>
<dbReference type="PANTHER" id="PTHR11880:SF8">
    <property type="entry name" value="SMALL RIBOSOMAL SUBUNIT PROTEIN US19M"/>
    <property type="match status" value="1"/>
</dbReference>
<dbReference type="Pfam" id="PF00203">
    <property type="entry name" value="Ribosomal_S19"/>
    <property type="match status" value="1"/>
</dbReference>
<dbReference type="PIRSF" id="PIRSF002144">
    <property type="entry name" value="Ribosomal_S19"/>
    <property type="match status" value="1"/>
</dbReference>
<dbReference type="PRINTS" id="PR00975">
    <property type="entry name" value="RIBOSOMALS19"/>
</dbReference>
<dbReference type="SUPFAM" id="SSF54570">
    <property type="entry name" value="Ribosomal protein S19"/>
    <property type="match status" value="1"/>
</dbReference>
<dbReference type="PROSITE" id="PS00323">
    <property type="entry name" value="RIBOSOMAL_S19"/>
    <property type="match status" value="1"/>
</dbReference>
<accession>Q1MID7</accession>
<sequence>MARSVWKGPFVDGYLLKKAEKVREGGRSEVIKIWSRRSTILPQFVGLTFGVYNGSKHIPVSVNEDMVGHKFGEFSPTRTYYGHGADKKAKRK</sequence>
<comment type="function">
    <text evidence="1">Protein S19 forms a complex with S13 that binds strongly to the 16S ribosomal RNA.</text>
</comment>
<comment type="similarity">
    <text evidence="1">Belongs to the universal ribosomal protein uS19 family.</text>
</comment>
<protein>
    <recommendedName>
        <fullName evidence="1">Small ribosomal subunit protein uS19</fullName>
    </recommendedName>
    <alternativeName>
        <fullName evidence="2">30S ribosomal protein S19</fullName>
    </alternativeName>
</protein>